<keyword id="KW-0963">Cytoplasm</keyword>
<keyword id="KW-0664">Pyridoxine biosynthesis</keyword>
<keyword id="KW-0808">Transferase</keyword>
<protein>
    <recommendedName>
        <fullName evidence="1">Pyridoxine 5'-phosphate synthase</fullName>
        <shortName evidence="1">PNP synthase</shortName>
        <ecNumber evidence="1">2.6.99.2</ecNumber>
    </recommendedName>
</protein>
<dbReference type="EC" id="2.6.99.2" evidence="1"/>
<dbReference type="EMBL" id="AP006841">
    <property type="protein sequence ID" value="BAD50709.1"/>
    <property type="molecule type" value="Genomic_DNA"/>
</dbReference>
<dbReference type="RefSeq" id="WP_005791132.1">
    <property type="nucleotide sequence ID" value="NZ_UYXF01000028.1"/>
</dbReference>
<dbReference type="RefSeq" id="YP_101243.1">
    <property type="nucleotide sequence ID" value="NC_006347.1"/>
</dbReference>
<dbReference type="SMR" id="Q3V814"/>
<dbReference type="STRING" id="295405.BF3967"/>
<dbReference type="KEGG" id="bfr:BF3967"/>
<dbReference type="PATRIC" id="fig|295405.11.peg.3813"/>
<dbReference type="HOGENOM" id="CLU_074563_1_0_10"/>
<dbReference type="OrthoDB" id="9806590at2"/>
<dbReference type="UniPathway" id="UPA00244">
    <property type="reaction ID" value="UER00313"/>
</dbReference>
<dbReference type="Proteomes" id="UP000002197">
    <property type="component" value="Chromosome"/>
</dbReference>
<dbReference type="GO" id="GO:0005829">
    <property type="term" value="C:cytosol"/>
    <property type="evidence" value="ECO:0007669"/>
    <property type="project" value="TreeGrafter"/>
</dbReference>
<dbReference type="GO" id="GO:0033856">
    <property type="term" value="F:pyridoxine 5'-phosphate synthase activity"/>
    <property type="evidence" value="ECO:0007669"/>
    <property type="project" value="UniProtKB-EC"/>
</dbReference>
<dbReference type="GO" id="GO:0008615">
    <property type="term" value="P:pyridoxine biosynthetic process"/>
    <property type="evidence" value="ECO:0007669"/>
    <property type="project" value="UniProtKB-UniRule"/>
</dbReference>
<dbReference type="CDD" id="cd00003">
    <property type="entry name" value="PNPsynthase"/>
    <property type="match status" value="1"/>
</dbReference>
<dbReference type="FunFam" id="3.20.20.70:FF:000150">
    <property type="entry name" value="Pyridoxine 5'-phosphate synthase"/>
    <property type="match status" value="1"/>
</dbReference>
<dbReference type="Gene3D" id="3.20.20.70">
    <property type="entry name" value="Aldolase class I"/>
    <property type="match status" value="1"/>
</dbReference>
<dbReference type="HAMAP" id="MF_00279">
    <property type="entry name" value="PdxJ"/>
    <property type="match status" value="1"/>
</dbReference>
<dbReference type="InterPro" id="IPR013785">
    <property type="entry name" value="Aldolase_TIM"/>
</dbReference>
<dbReference type="InterPro" id="IPR004569">
    <property type="entry name" value="PyrdxlP_synth_PdxJ"/>
</dbReference>
<dbReference type="InterPro" id="IPR036130">
    <property type="entry name" value="Pyridoxine-5'_phos_synth"/>
</dbReference>
<dbReference type="NCBIfam" id="TIGR00559">
    <property type="entry name" value="pdxJ"/>
    <property type="match status" value="1"/>
</dbReference>
<dbReference type="NCBIfam" id="NF003625">
    <property type="entry name" value="PRK05265.1-3"/>
    <property type="match status" value="1"/>
</dbReference>
<dbReference type="NCBIfam" id="NF003626">
    <property type="entry name" value="PRK05265.1-4"/>
    <property type="match status" value="1"/>
</dbReference>
<dbReference type="PANTHER" id="PTHR30456">
    <property type="entry name" value="PYRIDOXINE 5'-PHOSPHATE SYNTHASE"/>
    <property type="match status" value="1"/>
</dbReference>
<dbReference type="PANTHER" id="PTHR30456:SF0">
    <property type="entry name" value="PYRIDOXINE 5'-PHOSPHATE SYNTHASE"/>
    <property type="match status" value="1"/>
</dbReference>
<dbReference type="Pfam" id="PF03740">
    <property type="entry name" value="PdxJ"/>
    <property type="match status" value="1"/>
</dbReference>
<dbReference type="SUPFAM" id="SSF63892">
    <property type="entry name" value="Pyridoxine 5'-phosphate synthase"/>
    <property type="match status" value="1"/>
</dbReference>
<accession>Q3V814</accession>
<reference key="1">
    <citation type="journal article" date="2004" name="Proc. Natl. Acad. Sci. U.S.A.">
        <title>Genomic analysis of Bacteroides fragilis reveals extensive DNA inversions regulating cell surface adaptation.</title>
        <authorList>
            <person name="Kuwahara T."/>
            <person name="Yamashita A."/>
            <person name="Hirakawa H."/>
            <person name="Nakayama H."/>
            <person name="Toh H."/>
            <person name="Okada N."/>
            <person name="Kuhara S."/>
            <person name="Hattori M."/>
            <person name="Hayashi T."/>
            <person name="Ohnishi Y."/>
        </authorList>
    </citation>
    <scope>NUCLEOTIDE SEQUENCE [LARGE SCALE GENOMIC DNA]</scope>
    <source>
        <strain>YCH46</strain>
    </source>
</reference>
<evidence type="ECO:0000255" key="1">
    <source>
        <dbReference type="HAMAP-Rule" id="MF_00279"/>
    </source>
</evidence>
<organism>
    <name type="scientific">Bacteroides fragilis (strain YCH46)</name>
    <dbReference type="NCBI Taxonomy" id="295405"/>
    <lineage>
        <taxon>Bacteria</taxon>
        <taxon>Pseudomonadati</taxon>
        <taxon>Bacteroidota</taxon>
        <taxon>Bacteroidia</taxon>
        <taxon>Bacteroidales</taxon>
        <taxon>Bacteroidaceae</taxon>
        <taxon>Bacteroides</taxon>
    </lineage>
</organism>
<proteinExistence type="inferred from homology"/>
<sequence>MTKLSVNINKVATLRNARGGNVPNVVKVALDCESFGADGITVHPRPDERHIRRSDVYDLRPLLRTEFNIEGYPSPEFIDLVLKVKPHQVTLVPDDPSQITSNSGWDTKVNFDFLTEVLDEFNGAGIRTSVFVAPDAEMIEYAAKAGADRVELYTEPYATAYPKDPAAAVAPFVEAAKAARRLGIGLNAGHDLSLLNLNYFYKNIPWLDEVSIGHALISDALYLGLERTIQEYKNCLR</sequence>
<feature type="chain" id="PRO_0000231781" description="Pyridoxine 5'-phosphate synthase">
    <location>
        <begin position="1"/>
        <end position="237"/>
    </location>
</feature>
<feature type="active site" description="Proton acceptor" evidence="1">
    <location>
        <position position="43"/>
    </location>
</feature>
<feature type="active site" description="Proton acceptor" evidence="1">
    <location>
        <position position="70"/>
    </location>
</feature>
<feature type="active site" description="Proton donor" evidence="1">
    <location>
        <position position="190"/>
    </location>
</feature>
<feature type="binding site" evidence="1">
    <location>
        <position position="7"/>
    </location>
    <ligand>
        <name>3-amino-2-oxopropyl phosphate</name>
        <dbReference type="ChEBI" id="CHEBI:57279"/>
    </ligand>
</feature>
<feature type="binding site" evidence="1">
    <location>
        <position position="18"/>
    </location>
    <ligand>
        <name>3-amino-2-oxopropyl phosphate</name>
        <dbReference type="ChEBI" id="CHEBI:57279"/>
    </ligand>
</feature>
<feature type="binding site" evidence="1">
    <location>
        <position position="45"/>
    </location>
    <ligand>
        <name>1-deoxy-D-xylulose 5-phosphate</name>
        <dbReference type="ChEBI" id="CHEBI:57792"/>
    </ligand>
</feature>
<feature type="binding site" evidence="1">
    <location>
        <position position="50"/>
    </location>
    <ligand>
        <name>1-deoxy-D-xylulose 5-phosphate</name>
        <dbReference type="ChEBI" id="CHEBI:57792"/>
    </ligand>
</feature>
<feature type="binding site" evidence="1">
    <location>
        <position position="100"/>
    </location>
    <ligand>
        <name>1-deoxy-D-xylulose 5-phosphate</name>
        <dbReference type="ChEBI" id="CHEBI:57792"/>
    </ligand>
</feature>
<feature type="binding site" evidence="1">
    <location>
        <position position="191"/>
    </location>
    <ligand>
        <name>3-amino-2-oxopropyl phosphate</name>
        <dbReference type="ChEBI" id="CHEBI:57279"/>
    </ligand>
</feature>
<feature type="binding site" evidence="1">
    <location>
        <begin position="213"/>
        <end position="214"/>
    </location>
    <ligand>
        <name>3-amino-2-oxopropyl phosphate</name>
        <dbReference type="ChEBI" id="CHEBI:57279"/>
    </ligand>
</feature>
<feature type="site" description="Transition state stabilizer" evidence="1">
    <location>
        <position position="151"/>
    </location>
</feature>
<comment type="function">
    <text evidence="1">Catalyzes the complicated ring closure reaction between the two acyclic compounds 1-deoxy-D-xylulose-5-phosphate (DXP) and 3-amino-2-oxopropyl phosphate (1-amino-acetone-3-phosphate or AAP) to form pyridoxine 5'-phosphate (PNP) and inorganic phosphate.</text>
</comment>
<comment type="catalytic activity">
    <reaction evidence="1">
        <text>3-amino-2-oxopropyl phosphate + 1-deoxy-D-xylulose 5-phosphate = pyridoxine 5'-phosphate + phosphate + 2 H2O + H(+)</text>
        <dbReference type="Rhea" id="RHEA:15265"/>
        <dbReference type="ChEBI" id="CHEBI:15377"/>
        <dbReference type="ChEBI" id="CHEBI:15378"/>
        <dbReference type="ChEBI" id="CHEBI:43474"/>
        <dbReference type="ChEBI" id="CHEBI:57279"/>
        <dbReference type="ChEBI" id="CHEBI:57792"/>
        <dbReference type="ChEBI" id="CHEBI:58589"/>
        <dbReference type="EC" id="2.6.99.2"/>
    </reaction>
</comment>
<comment type="pathway">
    <text evidence="1">Cofactor biosynthesis; pyridoxine 5'-phosphate biosynthesis; pyridoxine 5'-phosphate from D-erythrose 4-phosphate: step 5/5.</text>
</comment>
<comment type="subunit">
    <text evidence="1">Homooctamer; tetramer of dimers.</text>
</comment>
<comment type="subcellular location">
    <subcellularLocation>
        <location evidence="1">Cytoplasm</location>
    </subcellularLocation>
</comment>
<comment type="similarity">
    <text evidence="1">Belongs to the PNP synthase family.</text>
</comment>
<name>PDXJ_BACFR</name>
<gene>
    <name evidence="1" type="primary">pdxJ</name>
    <name type="ordered locus">BF3967</name>
</gene>